<dbReference type="EC" id="5.3.1.5" evidence="1"/>
<dbReference type="EMBL" id="CP000826">
    <property type="protein sequence ID" value="ABV39208.1"/>
    <property type="molecule type" value="Genomic_DNA"/>
</dbReference>
<dbReference type="SMR" id="A8G7W8"/>
<dbReference type="STRING" id="399741.Spro_0098"/>
<dbReference type="KEGG" id="spe:Spro_0098"/>
<dbReference type="eggNOG" id="COG2115">
    <property type="taxonomic scope" value="Bacteria"/>
</dbReference>
<dbReference type="HOGENOM" id="CLU_037261_1_0_6"/>
<dbReference type="OrthoDB" id="9763981at2"/>
<dbReference type="GO" id="GO:0005737">
    <property type="term" value="C:cytoplasm"/>
    <property type="evidence" value="ECO:0007669"/>
    <property type="project" value="UniProtKB-SubCell"/>
</dbReference>
<dbReference type="GO" id="GO:0000287">
    <property type="term" value="F:magnesium ion binding"/>
    <property type="evidence" value="ECO:0007669"/>
    <property type="project" value="UniProtKB-UniRule"/>
</dbReference>
<dbReference type="GO" id="GO:0009045">
    <property type="term" value="F:xylose isomerase activity"/>
    <property type="evidence" value="ECO:0007669"/>
    <property type="project" value="UniProtKB-UniRule"/>
</dbReference>
<dbReference type="GO" id="GO:0042732">
    <property type="term" value="P:D-xylose metabolic process"/>
    <property type="evidence" value="ECO:0007669"/>
    <property type="project" value="UniProtKB-UniRule"/>
</dbReference>
<dbReference type="FunFam" id="3.20.20.150:FF:000002">
    <property type="entry name" value="Xylose isomerase"/>
    <property type="match status" value="1"/>
</dbReference>
<dbReference type="Gene3D" id="3.20.20.150">
    <property type="entry name" value="Divalent-metal-dependent TIM barrel enzymes"/>
    <property type="match status" value="1"/>
</dbReference>
<dbReference type="HAMAP" id="MF_00455">
    <property type="entry name" value="Xylose_isom_A"/>
    <property type="match status" value="1"/>
</dbReference>
<dbReference type="InterPro" id="IPR036237">
    <property type="entry name" value="Xyl_isomerase-like_sf"/>
</dbReference>
<dbReference type="InterPro" id="IPR013452">
    <property type="entry name" value="Xylose_isom_bac"/>
</dbReference>
<dbReference type="InterPro" id="IPR001998">
    <property type="entry name" value="Xylose_isomerase"/>
</dbReference>
<dbReference type="NCBIfam" id="NF003998">
    <property type="entry name" value="PRK05474.1"/>
    <property type="match status" value="1"/>
</dbReference>
<dbReference type="NCBIfam" id="TIGR02630">
    <property type="entry name" value="xylose_isom_A"/>
    <property type="match status" value="1"/>
</dbReference>
<dbReference type="PANTHER" id="PTHR48408">
    <property type="match status" value="1"/>
</dbReference>
<dbReference type="PANTHER" id="PTHR48408:SF1">
    <property type="entry name" value="XYLOSE ISOMERASE"/>
    <property type="match status" value="1"/>
</dbReference>
<dbReference type="PRINTS" id="PR00688">
    <property type="entry name" value="XYLOSISMRASE"/>
</dbReference>
<dbReference type="SUPFAM" id="SSF51658">
    <property type="entry name" value="Xylose isomerase-like"/>
    <property type="match status" value="1"/>
</dbReference>
<dbReference type="PROSITE" id="PS51415">
    <property type="entry name" value="XYLOSE_ISOMERASE"/>
    <property type="match status" value="1"/>
</dbReference>
<keyword id="KW-0119">Carbohydrate metabolism</keyword>
<keyword id="KW-0963">Cytoplasm</keyword>
<keyword id="KW-0413">Isomerase</keyword>
<keyword id="KW-0460">Magnesium</keyword>
<keyword id="KW-0479">Metal-binding</keyword>
<keyword id="KW-0859">Xylose metabolism</keyword>
<evidence type="ECO:0000255" key="1">
    <source>
        <dbReference type="HAMAP-Rule" id="MF_00455"/>
    </source>
</evidence>
<organism>
    <name type="scientific">Serratia proteamaculans (strain 568)</name>
    <dbReference type="NCBI Taxonomy" id="399741"/>
    <lineage>
        <taxon>Bacteria</taxon>
        <taxon>Pseudomonadati</taxon>
        <taxon>Pseudomonadota</taxon>
        <taxon>Gammaproteobacteria</taxon>
        <taxon>Enterobacterales</taxon>
        <taxon>Yersiniaceae</taxon>
        <taxon>Serratia</taxon>
    </lineage>
</organism>
<proteinExistence type="inferred from homology"/>
<reference key="1">
    <citation type="submission" date="2007-09" db="EMBL/GenBank/DDBJ databases">
        <title>Complete sequence of chromosome of Serratia proteamaculans 568.</title>
        <authorList>
            <consortium name="US DOE Joint Genome Institute"/>
            <person name="Copeland A."/>
            <person name="Lucas S."/>
            <person name="Lapidus A."/>
            <person name="Barry K."/>
            <person name="Glavina del Rio T."/>
            <person name="Dalin E."/>
            <person name="Tice H."/>
            <person name="Pitluck S."/>
            <person name="Chain P."/>
            <person name="Malfatti S."/>
            <person name="Shin M."/>
            <person name="Vergez L."/>
            <person name="Schmutz J."/>
            <person name="Larimer F."/>
            <person name="Land M."/>
            <person name="Hauser L."/>
            <person name="Kyrpides N."/>
            <person name="Kim E."/>
            <person name="Taghavi S."/>
            <person name="Newman L."/>
            <person name="Vangronsveld J."/>
            <person name="van der Lelie D."/>
            <person name="Richardson P."/>
        </authorList>
    </citation>
    <scope>NUCLEOTIDE SEQUENCE [LARGE SCALE GENOMIC DNA]</scope>
    <source>
        <strain>568</strain>
    </source>
</reference>
<feature type="chain" id="PRO_1000060322" description="Xylose isomerase">
    <location>
        <begin position="1"/>
        <end position="439"/>
    </location>
</feature>
<feature type="active site" evidence="1">
    <location>
        <position position="101"/>
    </location>
</feature>
<feature type="active site" evidence="1">
    <location>
        <position position="104"/>
    </location>
</feature>
<feature type="binding site" evidence="1">
    <location>
        <position position="232"/>
    </location>
    <ligand>
        <name>Mg(2+)</name>
        <dbReference type="ChEBI" id="CHEBI:18420"/>
        <label>1</label>
    </ligand>
</feature>
<feature type="binding site" evidence="1">
    <location>
        <position position="268"/>
    </location>
    <ligand>
        <name>Mg(2+)</name>
        <dbReference type="ChEBI" id="CHEBI:18420"/>
        <label>1</label>
    </ligand>
</feature>
<feature type="binding site" evidence="1">
    <location>
        <position position="268"/>
    </location>
    <ligand>
        <name>Mg(2+)</name>
        <dbReference type="ChEBI" id="CHEBI:18420"/>
        <label>2</label>
    </ligand>
</feature>
<feature type="binding site" evidence="1">
    <location>
        <position position="271"/>
    </location>
    <ligand>
        <name>Mg(2+)</name>
        <dbReference type="ChEBI" id="CHEBI:18420"/>
        <label>2</label>
    </ligand>
</feature>
<feature type="binding site" evidence="1">
    <location>
        <position position="296"/>
    </location>
    <ligand>
        <name>Mg(2+)</name>
        <dbReference type="ChEBI" id="CHEBI:18420"/>
        <label>1</label>
    </ligand>
</feature>
<feature type="binding site" evidence="1">
    <location>
        <position position="307"/>
    </location>
    <ligand>
        <name>Mg(2+)</name>
        <dbReference type="ChEBI" id="CHEBI:18420"/>
        <label>2</label>
    </ligand>
</feature>
<feature type="binding site" evidence="1">
    <location>
        <position position="309"/>
    </location>
    <ligand>
        <name>Mg(2+)</name>
        <dbReference type="ChEBI" id="CHEBI:18420"/>
        <label>2</label>
    </ligand>
</feature>
<feature type="binding site" evidence="1">
    <location>
        <position position="339"/>
    </location>
    <ligand>
        <name>Mg(2+)</name>
        <dbReference type="ChEBI" id="CHEBI:18420"/>
        <label>1</label>
    </ligand>
</feature>
<gene>
    <name evidence="1" type="primary">xylA</name>
    <name type="ordered locus">Spro_0098</name>
</gene>
<accession>A8G7W8</accession>
<comment type="catalytic activity">
    <reaction evidence="1">
        <text>alpha-D-xylose = alpha-D-xylulofuranose</text>
        <dbReference type="Rhea" id="RHEA:22816"/>
        <dbReference type="ChEBI" id="CHEBI:28518"/>
        <dbReference type="ChEBI" id="CHEBI:188998"/>
        <dbReference type="EC" id="5.3.1.5"/>
    </reaction>
</comment>
<comment type="cofactor">
    <cofactor evidence="1">
        <name>Mg(2+)</name>
        <dbReference type="ChEBI" id="CHEBI:18420"/>
    </cofactor>
    <text evidence="1">Binds 2 magnesium ions per subunit.</text>
</comment>
<comment type="subunit">
    <text evidence="1">Homotetramer.</text>
</comment>
<comment type="subcellular location">
    <subcellularLocation>
        <location evidence="1">Cytoplasm</location>
    </subcellularLocation>
</comment>
<comment type="similarity">
    <text evidence="1">Belongs to the xylose isomerase family.</text>
</comment>
<sequence length="439" mass="49435">MQSYFDQLEQVHYEGPTSNNPLAFHHYNPDELVLGKRMAEHLRFAACYWHTFCWNGADMFGVGSFDRPWQQPGDALTLAKRKADVAFEFFHKLNVPYYCFHDVDVSPEGASLKEYLHNFAVMTDVLEEKQHSSGVKLLWGTANCFTHPRYGAGAATNPDPEVFSWAATQVFTAMNATQRLGGENYVLWGGREGYETLLNTDLRQEREQIGRFMQMVVEHKHKTGFQGTLLIEPKPQEPTKHQYDYDVATVYGFLKQFGLEKEIKVNIEANHATLAGHSFHHEIATAIALGIFGSVDANRGDPQLGWDTDQFPISVEENALVMFEILKAGGFTTGGLNFDAKVRRQSTDKYDLFYGHIGAMDTMALALKVAAKMVTDGQLHQQVSKRYAGWNGELGQQILQGKLSLEALAQYAEGHALAPQHVSGRQEQLENLMNRYLFG</sequence>
<protein>
    <recommendedName>
        <fullName evidence="1">Xylose isomerase</fullName>
        <ecNumber evidence="1">5.3.1.5</ecNumber>
    </recommendedName>
</protein>
<name>XYLA_SERP5</name>